<reference key="1">
    <citation type="journal article" date="1990" name="Biochem. J.">
        <title>Calcium-binding affinity and calcium-enhanced activity of Clostridium thermocellum endoglucanase D.</title>
        <authorList>
            <person name="Chauvaux S."/>
            <person name="Beguin P."/>
            <person name="Aubert J.-P."/>
            <person name="Bhat K.M."/>
            <person name="Gow L.A."/>
            <person name="Wood T.M."/>
            <person name="Bairoch A."/>
        </authorList>
    </citation>
    <scope>CALCIUM-BINDING DATA</scope>
</reference>
<reference key="2">
    <citation type="journal article" date="1991" name="J. Biol. Chem.">
        <title>Identification of a histidyl residue in the active center of endoglucanase D from Clostridium thermocellum.</title>
        <authorList>
            <person name="Tomme P."/>
            <person name="Chauvaux S."/>
            <person name="Beguin P."/>
            <person name="Millet J."/>
            <person name="Aubert J.-P."/>
            <person name="Claeyssens M."/>
        </authorList>
    </citation>
    <scope>ACTIVE SITE HIS-492</scope>
    <scope>MUTAGENESIS OF HISTIDINE RESIDUES</scope>
</reference>
<reference key="3">
    <citation type="journal article" date="1992" name="J. Biol. Chem.">
        <title>Site-directed mutagenesis of essential carboxylic residues in Clostridium thermocellum endoglucanase CelD.</title>
        <authorList>
            <person name="Chauvaux S."/>
            <person name="Beguin P."/>
            <person name="Aubert J.-P."/>
        </authorList>
    </citation>
    <scope>ACTIVE SITE GLU-531</scope>
    <scope>MUTAGENESIS OF ASPARTIC ACID AND GLUTAMIC ACID RESIDUES</scope>
</reference>
<reference key="4">
    <citation type="journal article" date="1992" name="Biochem. J.">
        <title>Modification of catalytically important carboxy residues in endoglucanase D from Clostridium thermocellum.</title>
        <authorList>
            <person name="Tomme P."/>
            <person name="van Beeumen J."/>
            <person name="Claeyssens M."/>
        </authorList>
    </citation>
    <scope>ACTIVE SITE ASP-522</scope>
</reference>
<reference key="5">
    <citation type="journal article" date="1992" name="Nature">
        <title>Three-dimensional structure of a thermostable bacterial cellulase.</title>
        <authorList>
            <person name="Juy M."/>
            <person name="Amit A.G."/>
            <person name="Alzari P.M."/>
            <person name="Poljak R.J."/>
            <person name="Claeyssens M."/>
            <person name="Beguin P."/>
            <person name="Aubert J.-P."/>
        </authorList>
    </citation>
    <scope>X-RAY CRYSTALLOGRAPHY (2.3 ANGSTROMS)</scope>
</reference>
<reference key="6">
    <citation type="journal article" date="1995" name="J. Mol. Biol.">
        <title>Multiple crystal forms of endoglucanase CelD: signal peptide residues modulate lattice formation.</title>
        <authorList>
            <person name="Chitarra V."/>
            <person name="Souchon H."/>
            <person name="Spinelli S."/>
            <person name="Juy M."/>
            <person name="Beguin P."/>
            <person name="Alzari P.M."/>
        </authorList>
    </citation>
    <scope>X-RAY CRYSTALLOGRAPHY (1.9 ANGSTROMS)</scope>
</reference>
<reference key="7">
    <citation type="journal article" date="1996" name="J. Mol. Biol.">
        <title>The crystal structure of a family 5 endoglucanase mutant in complexed and uncomplexed forms reveals an induced fit activation mechanism.</title>
        <authorList>
            <person name="Dominguez R."/>
            <person name="Souchon H."/>
            <person name="Lascombe M.-B."/>
            <person name="Alzari P.M."/>
        </authorList>
    </citation>
    <scope>X-RAY CRYSTALLOGRAPHY (1.9 AND 2.3 ANGSTROMS) OF MUTANT GLN-116</scope>
</reference>
<feature type="signal peptide">
    <location>
        <begin position="1" status="less than"/>
        <end position="17"/>
    </location>
</feature>
<feature type="chain" id="PRO_0000007949" description="Endoglucanase D">
    <location>
        <begin position="18"/>
        <end position="625"/>
    </location>
</feature>
<feature type="domain" description="Dockerin" evidence="1">
    <location>
        <begin position="555"/>
        <end position="625"/>
    </location>
</feature>
<feature type="active site" description="Nucleophile" evidence="4">
    <location>
        <position position="177"/>
    </location>
</feature>
<feature type="active site" evidence="2 7">
    <location>
        <position position="492"/>
    </location>
</feature>
<feature type="active site" evidence="3 6">
    <location>
        <position position="522"/>
    </location>
</feature>
<feature type="active site" description="Proton donor" evidence="3 5">
    <location>
        <position position="531"/>
    </location>
</feature>
<feature type="mutagenesis site" description="79% of wild-type activity.">
    <original>H</original>
    <variation>A</variation>
    <location>
        <position position="41"/>
    </location>
</feature>
<feature type="mutagenesis site" description="104% of wild-type activity.">
    <original>H</original>
    <variation>A</variation>
    <location>
        <position position="143"/>
    </location>
</feature>
<feature type="mutagenesis site" description="77% of wild-type activity.">
    <original>H</original>
    <variation>A</variation>
    <location>
        <position position="146"/>
    </location>
</feature>
<feature type="mutagenesis site" description="2% of wild-type activity.">
    <original>H</original>
    <variation>A</variation>
    <location>
        <position position="150"/>
    </location>
</feature>
<feature type="mutagenesis site" description="124% of wild-type activity.">
    <original>H</original>
    <variation>A</variation>
    <location>
        <position position="163"/>
    </location>
</feature>
<feature type="mutagenesis site" description="8% of wild-type activity.">
    <original>H</original>
    <variation>A</variation>
    <location>
        <position position="173"/>
    </location>
</feature>
<feature type="mutagenesis site" description="0.08% of wild-type activity.">
    <original>D</original>
    <variation>A</variation>
    <location>
        <position position="174"/>
    </location>
</feature>
<feature type="mutagenesis site" description="0.2% of wild-type activity.">
    <original>D</original>
    <variation>A</variation>
    <location>
        <position position="177"/>
    </location>
</feature>
<feature type="mutagenesis site" description="17% of wild-type activity.">
    <original>H</original>
    <variation>S</variation>
    <location>
        <position position="198"/>
    </location>
</feature>
<feature type="mutagenesis site" description="72% of wild-type activity.">
    <original>D</original>
    <variation>A</variation>
    <location>
        <position position="222"/>
    </location>
</feature>
<feature type="mutagenesis site" description="90% of wild-type activity.">
    <original>H</original>
    <variation>A</variation>
    <location>
        <position position="245"/>
    </location>
</feature>
<feature type="mutagenesis site" description="19% of wild-type activity.">
    <original>H</original>
    <variation>A</variation>
    <location>
        <position position="262"/>
    </location>
</feature>
<feature type="mutagenesis site" description="98% of wild-type activity.">
    <original>D</original>
    <variation>A</variation>
    <location>
        <position position="293"/>
    </location>
</feature>
<feature type="mutagenesis site" description="86% of wild-type activity.">
    <original>D</original>
    <variation>A</variation>
    <location>
        <position position="337"/>
    </location>
</feature>
<feature type="mutagenesis site" description="32% of wild-type activity.">
    <original>H</original>
    <variation>S</variation>
    <location>
        <position position="421"/>
    </location>
</feature>
<feature type="mutagenesis site" description="9% of wild-type activity.">
    <original>H</original>
    <variation>A</variation>
    <location>
        <position position="468"/>
    </location>
</feature>
<feature type="mutagenesis site" description="25% of wild-type activity.">
    <original>H</original>
    <variation>S</variation>
    <location>
        <position position="492"/>
    </location>
</feature>
<feature type="mutagenesis site" description="0.8% of wild-type activity.">
    <original>D</original>
    <variation>A</variation>
    <location>
        <position position="493"/>
    </location>
</feature>
<feature type="mutagenesis site" description="224% of wild-type activity.">
    <original>D</original>
    <variation>A</variation>
    <location>
        <position position="499"/>
    </location>
</feature>
<feature type="mutagenesis site" description="127% of wild-type activity.">
    <original>E</original>
    <variation>A</variation>
    <location>
        <position position="503"/>
    </location>
</feature>
<feature type="mutagenesis site" description="91% of wild-type activity.">
    <original>D</original>
    <variation>A</variation>
    <location>
        <position position="519"/>
    </location>
</feature>
<feature type="mutagenesis site" description="1% of wild-type activity.">
    <original>D</original>
    <variation>A</variation>
    <location>
        <position position="522"/>
    </location>
</feature>
<feature type="mutagenesis site" description="118% of wild-type activity.">
    <original>D</original>
    <variation>A</variation>
    <location>
        <position position="525"/>
    </location>
</feature>
<feature type="mutagenesis site" description="0.3% of wild-type activity.">
    <original>E</original>
    <variation>A</variation>
    <location>
        <position position="531"/>
    </location>
</feature>
<feature type="non-terminal residue">
    <location>
        <position position="1"/>
    </location>
</feature>
<feature type="strand" evidence="10">
    <location>
        <begin position="34"/>
        <end position="37"/>
    </location>
</feature>
<feature type="strand" evidence="10">
    <location>
        <begin position="44"/>
        <end position="47"/>
    </location>
</feature>
<feature type="strand" evidence="10">
    <location>
        <begin position="53"/>
        <end position="58"/>
    </location>
</feature>
<feature type="strand" evidence="10">
    <location>
        <begin position="61"/>
        <end position="68"/>
    </location>
</feature>
<feature type="strand" evidence="10">
    <location>
        <begin position="70"/>
        <end position="74"/>
    </location>
</feature>
<feature type="turn" evidence="10">
    <location>
        <begin position="75"/>
        <end position="78"/>
    </location>
</feature>
<feature type="strand" evidence="10">
    <location>
        <begin position="79"/>
        <end position="85"/>
    </location>
</feature>
<feature type="strand" evidence="10">
    <location>
        <begin position="93"/>
        <end position="99"/>
    </location>
</feature>
<feature type="turn" evidence="10">
    <location>
        <begin position="100"/>
        <end position="102"/>
    </location>
</feature>
<feature type="strand" evidence="10">
    <location>
        <begin position="108"/>
        <end position="110"/>
    </location>
</feature>
<feature type="turn" evidence="10">
    <location>
        <begin position="112"/>
        <end position="115"/>
    </location>
</feature>
<feature type="helix" evidence="10">
    <location>
        <begin position="116"/>
        <end position="128"/>
    </location>
</feature>
<feature type="strand" evidence="10">
    <location>
        <begin position="135"/>
        <end position="139"/>
    </location>
</feature>
<feature type="strand" evidence="10">
    <location>
        <begin position="142"/>
        <end position="146"/>
    </location>
</feature>
<feature type="helix" evidence="10">
    <location>
        <begin position="157"/>
        <end position="160"/>
    </location>
</feature>
<feature type="strand" evidence="10">
    <location>
        <begin position="175"/>
        <end position="177"/>
    </location>
</feature>
<feature type="helix" evidence="10">
    <location>
        <begin position="182"/>
        <end position="198"/>
    </location>
</feature>
<feature type="helix" evidence="10">
    <location>
        <begin position="200"/>
        <end position="203"/>
    </location>
</feature>
<feature type="turn" evidence="10">
    <location>
        <begin position="211"/>
        <end position="214"/>
    </location>
</feature>
<feature type="strand" evidence="10">
    <location>
        <begin position="215"/>
        <end position="217"/>
    </location>
</feature>
<feature type="helix" evidence="10">
    <location>
        <begin position="219"/>
        <end position="231"/>
    </location>
</feature>
<feature type="helix" evidence="10">
    <location>
        <begin position="232"/>
        <end position="234"/>
    </location>
</feature>
<feature type="strand" evidence="10">
    <location>
        <begin position="243"/>
        <end position="248"/>
    </location>
</feature>
<feature type="helix" evidence="10">
    <location>
        <begin position="258"/>
        <end position="260"/>
    </location>
</feature>
<feature type="strand" evidence="9">
    <location>
        <begin position="266"/>
        <end position="270"/>
    </location>
</feature>
<feature type="helix" evidence="10">
    <location>
        <begin position="272"/>
        <end position="289"/>
    </location>
</feature>
<feature type="turn" evidence="10">
    <location>
        <begin position="290"/>
        <end position="292"/>
    </location>
</feature>
<feature type="helix" evidence="10">
    <location>
        <begin position="294"/>
        <end position="313"/>
    </location>
</feature>
<feature type="helix" evidence="10">
    <location>
        <begin position="336"/>
        <end position="350"/>
    </location>
</feature>
<feature type="helix" evidence="10">
    <location>
        <begin position="353"/>
        <end position="363"/>
    </location>
</feature>
<feature type="strand" evidence="10">
    <location>
        <begin position="367"/>
        <end position="370"/>
    </location>
</feature>
<feature type="helix" evidence="10">
    <location>
        <begin position="380"/>
        <end position="389"/>
    </location>
</feature>
<feature type="helix" evidence="10">
    <location>
        <begin position="397"/>
        <end position="420"/>
    </location>
</feature>
<feature type="turn" evidence="10">
    <location>
        <begin position="426"/>
        <end position="429"/>
    </location>
</feature>
<feature type="helix" evidence="10">
    <location>
        <begin position="435"/>
        <end position="452"/>
    </location>
</feature>
<feature type="helix" evidence="10">
    <location>
        <begin position="456"/>
        <end position="469"/>
    </location>
</feature>
<feature type="strand" evidence="10">
    <location>
        <begin position="483"/>
        <end position="486"/>
    </location>
</feature>
<feature type="helix" evidence="10">
    <location>
        <begin position="494"/>
        <end position="498"/>
    </location>
</feature>
<feature type="helix" evidence="10">
    <location>
        <begin position="527"/>
        <end position="530"/>
    </location>
</feature>
<feature type="helix" evidence="10">
    <location>
        <begin position="534"/>
        <end position="545"/>
    </location>
</feature>
<feature type="turn" evidence="10">
    <location>
        <begin position="546"/>
        <end position="549"/>
    </location>
</feature>
<organism>
    <name type="scientific">Acetivibrio thermocellus</name>
    <name type="common">Hungateiclostridium thermocellum</name>
    <name type="synonym">Clostridium thermocellum</name>
    <dbReference type="NCBI Taxonomy" id="1515"/>
    <lineage>
        <taxon>Bacteria</taxon>
        <taxon>Bacillati</taxon>
        <taxon>Bacillota</taxon>
        <taxon>Clostridia</taxon>
        <taxon>Eubacteriales</taxon>
        <taxon>Oscillospiraceae</taxon>
        <taxon>Acetivibrio</taxon>
    </lineage>
</organism>
<proteinExistence type="evidence at protein level"/>
<accession>P0C2S4</accession>
<accession>P04954</accession>
<comment type="function">
    <text>This enzyme catalyzes the endohydrolysis of 1,4-beta-glucosidic linkages in cellulose, lichenin and cereal beta-D-glucans.</text>
</comment>
<comment type="catalytic activity">
    <reaction>
        <text>Endohydrolysis of (1-&gt;4)-beta-D-glucosidic linkages in cellulose, lichenin and cereal beta-D-glucans.</text>
        <dbReference type="EC" id="3.2.1.4"/>
    </reaction>
</comment>
<comment type="cofactor">
    <cofactor>
        <name>Ca(2+)</name>
        <dbReference type="ChEBI" id="CHEBI:29108"/>
    </cofactor>
</comment>
<comment type="similarity">
    <text evidence="4 8">Belongs to the glycosyl hydrolase 9 (cellulase E) family.</text>
</comment>
<comment type="caution">
    <text evidence="8">The sequence shown here has been extracted from PDB entry 1CLC.</text>
</comment>
<gene>
    <name type="primary">celD</name>
</gene>
<protein>
    <recommendedName>
        <fullName>Endoglucanase D</fullName>
        <shortName>EGD</shortName>
        <ecNumber>3.2.1.4</ecNumber>
    </recommendedName>
    <alternativeName>
        <fullName>Cellulase D</fullName>
    </alternativeName>
    <alternativeName>
        <fullName>Endo-1,4-beta-glucanase</fullName>
    </alternativeName>
</protein>
<sequence length="625" mass="69707">SLTGVFPSGLIETKVSAAKITENYQFDSRIRLNSIGFIPNHSKKATIAANCSTFYVVKEDGTIVYTGTATSMFDNDTKETVYIADFSSVNEEGTYYLAVPGVGKSVNFKIAMNVYEDAFKTAMLGMYLLRCGTSVSATYNGIHYSHGPCHTNDAYLDYINGQHTKKDSTKGWHDAGDYNKYVVNAGITVGSMFLAWEHFKDQLEPVALEIPEKNNSIPDFLDELKYEIDWILTMQYPDGSGRVAHKVSTRNFGGFIMPENEHDERFFVPWSSAATADFVAMTAMAARIFRPYDPQYAEKCINAAKVSYEFLKNNPANVFANQSGFSTGEYATVSDADDRLWAAAEMWETLGDEEYLRDFENRAAQFSKKIEADFDWDNVANLGMFTYLLSERPGKNPALVQSIKDSLLSTADSIVRTSQNHGYGRTLGTTYYWGCNGTVVRQTMILQVANKISPNNDYVNAALDAISHVFGRNYYNRSYVTGLGINPPMNPHDRRSGADGIWEPWPGYLVGGGWPGPKDWVDIQDSYQTNEIAINWNAALIYALAGFVNYNSPQNEVLYGDVNDDGKVNSTDLTLLKRYVLKAVSTLPSSKAEKNADVNRDGRVNSSDVTILSRYLIRVIEKLPI</sequence>
<keyword id="KW-0002">3D-structure</keyword>
<keyword id="KW-0106">Calcium</keyword>
<keyword id="KW-0119">Carbohydrate metabolism</keyword>
<keyword id="KW-0136">Cellulose degradation</keyword>
<keyword id="KW-0326">Glycosidase</keyword>
<keyword id="KW-0378">Hydrolase</keyword>
<keyword id="KW-0624">Polysaccharide degradation</keyword>
<keyword id="KW-0732">Signal</keyword>
<evidence type="ECO:0000255" key="1">
    <source>
        <dbReference type="PROSITE-ProRule" id="PRU01102"/>
    </source>
</evidence>
<evidence type="ECO:0000255" key="2">
    <source>
        <dbReference type="PROSITE-ProRule" id="PRU10059"/>
    </source>
</evidence>
<evidence type="ECO:0000255" key="3">
    <source>
        <dbReference type="PROSITE-ProRule" id="PRU10060"/>
    </source>
</evidence>
<evidence type="ECO:0000255" key="4">
    <source>
        <dbReference type="PROSITE-ProRule" id="PRU10140"/>
    </source>
</evidence>
<evidence type="ECO:0000269" key="5">
    <source>
    </source>
</evidence>
<evidence type="ECO:0000269" key="6">
    <source>
    </source>
</evidence>
<evidence type="ECO:0000269" key="7">
    <source>
    </source>
</evidence>
<evidence type="ECO:0000305" key="8"/>
<evidence type="ECO:0007829" key="9">
    <source>
        <dbReference type="PDB" id="1CLC"/>
    </source>
</evidence>
<evidence type="ECO:0007829" key="10">
    <source>
        <dbReference type="PDB" id="4CJ0"/>
    </source>
</evidence>
<dbReference type="EC" id="3.2.1.4"/>
<dbReference type="PIR" id="A25535">
    <property type="entry name" value="CZCLDM"/>
</dbReference>
<dbReference type="PDB" id="1CLC">
    <property type="method" value="X-ray"/>
    <property type="resolution" value="1.90 A"/>
    <property type="chains" value="A=1-625"/>
</dbReference>
<dbReference type="PDB" id="4CJ0">
    <property type="method" value="X-ray"/>
    <property type="resolution" value="1.10 A"/>
    <property type="chains" value="A=1-625"/>
</dbReference>
<dbReference type="PDB" id="4CJ1">
    <property type="method" value="X-ray"/>
    <property type="resolution" value="1.63 A"/>
    <property type="chains" value="A=1-625"/>
</dbReference>
<dbReference type="PDBsum" id="1CLC"/>
<dbReference type="PDBsum" id="4CJ0"/>
<dbReference type="PDBsum" id="4CJ1"/>
<dbReference type="SMR" id="P0C2S4"/>
<dbReference type="EvolutionaryTrace" id="P0C2S4"/>
<dbReference type="GO" id="GO:0008810">
    <property type="term" value="F:cellulase activity"/>
    <property type="evidence" value="ECO:0007669"/>
    <property type="project" value="UniProtKB-EC"/>
</dbReference>
<dbReference type="GO" id="GO:0030245">
    <property type="term" value="P:cellulose catabolic process"/>
    <property type="evidence" value="ECO:0007669"/>
    <property type="project" value="UniProtKB-KW"/>
</dbReference>
<dbReference type="CDD" id="cd14256">
    <property type="entry name" value="Dockerin_I"/>
    <property type="match status" value="1"/>
</dbReference>
<dbReference type="CDD" id="cd02850">
    <property type="entry name" value="E_set_Cellulase_N"/>
    <property type="match status" value="1"/>
</dbReference>
<dbReference type="FunFam" id="1.10.1330.10:FF:000001">
    <property type="entry name" value="Endoglucanase D"/>
    <property type="match status" value="1"/>
</dbReference>
<dbReference type="Gene3D" id="1.50.10.10">
    <property type="match status" value="1"/>
</dbReference>
<dbReference type="Gene3D" id="1.10.1330.10">
    <property type="entry name" value="Dockerin domain"/>
    <property type="match status" value="1"/>
</dbReference>
<dbReference type="Gene3D" id="2.60.40.10">
    <property type="entry name" value="Immunoglobulins"/>
    <property type="match status" value="1"/>
</dbReference>
<dbReference type="InterPro" id="IPR008928">
    <property type="entry name" value="6-hairpin_glycosidase_sf"/>
</dbReference>
<dbReference type="InterPro" id="IPR012341">
    <property type="entry name" value="6hp_glycosidase-like_sf"/>
</dbReference>
<dbReference type="InterPro" id="IPR004197">
    <property type="entry name" value="Cellulase_Ig-like"/>
</dbReference>
<dbReference type="InterPro" id="IPR002105">
    <property type="entry name" value="Dockerin_1_rpt"/>
</dbReference>
<dbReference type="InterPro" id="IPR016134">
    <property type="entry name" value="Dockerin_dom"/>
</dbReference>
<dbReference type="InterPro" id="IPR036439">
    <property type="entry name" value="Dockerin_dom_sf"/>
</dbReference>
<dbReference type="InterPro" id="IPR018247">
    <property type="entry name" value="EF_Hand_1_Ca_BS"/>
</dbReference>
<dbReference type="InterPro" id="IPR001701">
    <property type="entry name" value="Glyco_hydro_9"/>
</dbReference>
<dbReference type="InterPro" id="IPR033126">
    <property type="entry name" value="Glyco_hydro_9_Asp/Glu_AS"/>
</dbReference>
<dbReference type="InterPro" id="IPR018221">
    <property type="entry name" value="Glyco_hydro_9_His_AS"/>
</dbReference>
<dbReference type="InterPro" id="IPR013783">
    <property type="entry name" value="Ig-like_fold"/>
</dbReference>
<dbReference type="InterPro" id="IPR014756">
    <property type="entry name" value="Ig_E-set"/>
</dbReference>
<dbReference type="PANTHER" id="PTHR22298">
    <property type="entry name" value="ENDO-1,4-BETA-GLUCANASE"/>
    <property type="match status" value="1"/>
</dbReference>
<dbReference type="Pfam" id="PF02927">
    <property type="entry name" value="CelD_N"/>
    <property type="match status" value="1"/>
</dbReference>
<dbReference type="Pfam" id="PF00404">
    <property type="entry name" value="Dockerin_1"/>
    <property type="match status" value="1"/>
</dbReference>
<dbReference type="Pfam" id="PF00759">
    <property type="entry name" value="Glyco_hydro_9"/>
    <property type="match status" value="1"/>
</dbReference>
<dbReference type="SUPFAM" id="SSF81296">
    <property type="entry name" value="E set domains"/>
    <property type="match status" value="1"/>
</dbReference>
<dbReference type="SUPFAM" id="SSF48208">
    <property type="entry name" value="Six-hairpin glycosidases"/>
    <property type="match status" value="1"/>
</dbReference>
<dbReference type="SUPFAM" id="SSF63446">
    <property type="entry name" value="Type I dockerin domain"/>
    <property type="match status" value="1"/>
</dbReference>
<dbReference type="PROSITE" id="PS00448">
    <property type="entry name" value="CLOS_CELLULOSOME_RPT"/>
    <property type="match status" value="2"/>
</dbReference>
<dbReference type="PROSITE" id="PS51766">
    <property type="entry name" value="DOCKERIN"/>
    <property type="match status" value="1"/>
</dbReference>
<dbReference type="PROSITE" id="PS00018">
    <property type="entry name" value="EF_HAND_1"/>
    <property type="match status" value="2"/>
</dbReference>
<dbReference type="PROSITE" id="PS60032">
    <property type="entry name" value="GH9_1"/>
    <property type="match status" value="1"/>
</dbReference>
<dbReference type="PROSITE" id="PS00592">
    <property type="entry name" value="GH9_2"/>
    <property type="match status" value="1"/>
</dbReference>
<dbReference type="PROSITE" id="PS00698">
    <property type="entry name" value="GH9_3"/>
    <property type="match status" value="1"/>
</dbReference>
<name>GUND_ACETH</name>